<protein>
    <recommendedName>
        <fullName evidence="14">Protein fem-1 homolog C</fullName>
        <shortName evidence="13">FEM1c</shortName>
    </recommendedName>
    <alternativeName>
        <fullName>FEM1-gamma</fullName>
    </alternativeName>
</protein>
<organism>
    <name type="scientific">Homo sapiens</name>
    <name type="common">Human</name>
    <dbReference type="NCBI Taxonomy" id="9606"/>
    <lineage>
        <taxon>Eukaryota</taxon>
        <taxon>Metazoa</taxon>
        <taxon>Chordata</taxon>
        <taxon>Craniata</taxon>
        <taxon>Vertebrata</taxon>
        <taxon>Euteleostomi</taxon>
        <taxon>Mammalia</taxon>
        <taxon>Eutheria</taxon>
        <taxon>Euarchontoglires</taxon>
        <taxon>Primates</taxon>
        <taxon>Haplorrhini</taxon>
        <taxon>Catarrhini</taxon>
        <taxon>Hominidae</taxon>
        <taxon>Homo</taxon>
    </lineage>
</organism>
<name>FEM1C_HUMAN</name>
<feature type="chain" id="PRO_0000324536" description="Protein fem-1 homolog C">
    <location>
        <begin position="1"/>
        <end position="617"/>
    </location>
</feature>
<feature type="repeat" description="ANK 1">
    <location>
        <begin position="2"/>
        <end position="31"/>
    </location>
</feature>
<feature type="repeat" description="ANK 2">
    <location>
        <begin position="40"/>
        <end position="70"/>
    </location>
</feature>
<feature type="repeat" description="ANK 3">
    <location>
        <begin position="82"/>
        <end position="111"/>
    </location>
</feature>
<feature type="repeat" description="ANK 4">
    <location>
        <begin position="115"/>
        <end position="144"/>
    </location>
</feature>
<feature type="repeat" description="ANK 5">
    <location>
        <begin position="148"/>
        <end position="177"/>
    </location>
</feature>
<feature type="repeat" description="ANK 6">
    <location>
        <begin position="181"/>
        <end position="210"/>
    </location>
</feature>
<feature type="repeat" description="ANK 7">
    <location>
        <begin position="213"/>
        <end position="242"/>
    </location>
</feature>
<feature type="repeat" description="TPR 1">
    <location>
        <begin position="245"/>
        <end position="279"/>
    </location>
</feature>
<feature type="repeat" description="TPR 2">
    <location>
        <begin position="338"/>
        <end position="371"/>
    </location>
</feature>
<feature type="repeat" description="ANK 8">
    <location>
        <begin position="481"/>
        <end position="523"/>
    </location>
</feature>
<feature type="repeat" description="ANK 9">
    <location>
        <begin position="527"/>
        <end position="556"/>
    </location>
</feature>
<feature type="modified residue" description="N-acetylmethionine" evidence="27">
    <location>
        <position position="1"/>
    </location>
</feature>
<feature type="sequence variant" id="VAR_087634" description="Found in a patient with neurodevelopmental disorder with absent speech, pyramidal signs and limb ataxia; likely pathogenic." evidence="10">
    <original>D</original>
    <variation>H</variation>
    <location>
        <position position="126"/>
    </location>
</feature>
<feature type="sequence variant" id="VAR_039810" description="In a breast cancer sample; somatic mutation." evidence="3">
    <original>D</original>
    <variation>N</variation>
    <location>
        <position position="434"/>
    </location>
</feature>
<feature type="sequence variant" id="VAR_039811" description="In a breast cancer sample; somatic mutation; dbSNP:rs753336652." evidence="3">
    <original>D</original>
    <variation>N</variation>
    <location>
        <position position="462"/>
    </location>
</feature>
<feature type="mutagenesis site" description="Strongly reduced binding to C-degron with an arginine at the C-terminus." evidence="9">
    <original>F</original>
    <variation>A</variation>
    <location>
        <position position="76"/>
    </location>
</feature>
<feature type="mutagenesis site" description="Reduced binding to C-degron with an arginine at the C-terminus. Abolished binding to C-degron with an arginine at the C-terminus; when associated with A-126." evidence="8 9">
    <original>D</original>
    <variation>A</variation>
    <location>
        <position position="77"/>
    </location>
</feature>
<feature type="mutagenesis site" description="Abolished binding to C-degron with an arginine at the C-terminus." evidence="9">
    <original>S</original>
    <variation>A</variation>
    <location>
        <position position="117"/>
    </location>
</feature>
<feature type="mutagenesis site" description="Reduced binding to C-degron with an arginine at the C-terminus." evidence="8 9">
    <original>R</original>
    <variation>A</variation>
    <location>
        <position position="121"/>
    </location>
</feature>
<feature type="mutagenesis site" description="Strongly reduced binding to C-degron with an arginine at the C-terminus." evidence="8 9">
    <original>F</original>
    <variation>A</variation>
    <location>
        <position position="125"/>
    </location>
</feature>
<feature type="mutagenesis site" description="Reduced binding to C-degron with an arginine at the C-terminus. Abolished binding to C-degron with an arginine at the C-terminus; when associated with A-77." evidence="8 9">
    <original>D</original>
    <variation>A</variation>
    <location>
        <position position="126"/>
    </location>
</feature>
<feature type="mutagenesis site" description="Strongly reduced binding to C-degron with an arginine at the C-terminus." evidence="8">
    <original>H</original>
    <variation>A</variation>
    <location>
        <position position="148"/>
    </location>
</feature>
<feature type="mutagenesis site" description="Modifies specificity for C-degron at the C-terminus and promotes increased affinity for C-degrons usually recognized by FEM1B; when associated with A-183--F-188." evidence="8">
    <original>H</original>
    <variation>N</variation>
    <location>
        <position position="150"/>
    </location>
</feature>
<feature type="mutagenesis site" description="Strongly reduced binding to C-degron with an arginine at the C-terminus." evidence="8">
    <original>Y</original>
    <variation>A</variation>
    <location>
        <position position="158"/>
    </location>
</feature>
<feature type="mutagenesis site" description="Abolished binding to C-degron with an arginine at the C-terminus." evidence="8">
    <original>NTALHDCAE</original>
    <variation>ATALHACAA</variation>
    <location>
        <begin position="183"/>
        <end position="191"/>
    </location>
</feature>
<feature type="mutagenesis site" description="Modifies specificity for C-degron at the C-terminus and promotes increased affinity for C-degrons usually recognized by FEM1B; when associated with N-150." evidence="8">
    <original>NTALHD</original>
    <variation>ATALHF</variation>
    <location>
        <begin position="183"/>
        <end position="188"/>
    </location>
</feature>
<feature type="mutagenesis site" description="Reduced binding to C-degron with an arginine at the C-terminus." evidence="9">
    <original>D</original>
    <variation>A</variation>
    <location>
        <position position="188"/>
    </location>
</feature>
<feature type="mutagenesis site" description="Nearly abolished binding to C-degron with an arginine at the C-terminus." evidence="9">
    <original>D</original>
    <variation>K</variation>
    <location>
        <position position="188"/>
    </location>
</feature>
<feature type="mutagenesis site" description="Reduced binding to C-degron with an arginine at the C-terminus." evidence="9">
    <original>E</original>
    <variation>A</variation>
    <location>
        <position position="191"/>
    </location>
</feature>
<feature type="mutagenesis site" description="Strongly reduced binding to C-degron with an arginine at the C-terminus." evidence="9">
    <original>E</original>
    <variation>K</variation>
    <location>
        <position position="191"/>
    </location>
</feature>
<feature type="helix" evidence="33">
    <location>
        <begin position="3"/>
        <end position="13"/>
    </location>
</feature>
<feature type="helix" evidence="33">
    <location>
        <begin position="16"/>
        <end position="22"/>
    </location>
</feature>
<feature type="strand" evidence="28">
    <location>
        <begin position="24"/>
        <end position="26"/>
    </location>
</feature>
<feature type="helix" evidence="33">
    <location>
        <begin position="28"/>
        <end position="35"/>
    </location>
</feature>
<feature type="helix" evidence="29">
    <location>
        <begin position="39"/>
        <end position="41"/>
    </location>
</feature>
<feature type="helix" evidence="33">
    <location>
        <begin position="44"/>
        <end position="50"/>
    </location>
</feature>
<feature type="helix" evidence="33">
    <location>
        <begin position="54"/>
        <end position="63"/>
    </location>
</feature>
<feature type="helix" evidence="33">
    <location>
        <begin position="66"/>
        <end position="69"/>
    </location>
</feature>
<feature type="strand" evidence="33">
    <location>
        <begin position="72"/>
        <end position="76"/>
    </location>
</feature>
<feature type="strand" evidence="33">
    <location>
        <begin position="79"/>
        <end position="84"/>
    </location>
</feature>
<feature type="helix" evidence="33">
    <location>
        <begin position="86"/>
        <end position="92"/>
    </location>
</feature>
<feature type="helix" evidence="33">
    <location>
        <begin position="96"/>
        <end position="104"/>
    </location>
</feature>
<feature type="helix" evidence="33">
    <location>
        <begin position="119"/>
        <end position="126"/>
    </location>
</feature>
<feature type="helix" evidence="33">
    <location>
        <begin position="129"/>
        <end position="137"/>
    </location>
</feature>
<feature type="helix" evidence="33">
    <location>
        <begin position="152"/>
        <end position="159"/>
    </location>
</feature>
<feature type="helix" evidence="33">
    <location>
        <begin position="162"/>
        <end position="170"/>
    </location>
</feature>
<feature type="helix" evidence="33">
    <location>
        <begin position="185"/>
        <end position="192"/>
    </location>
</feature>
<feature type="helix" evidence="33">
    <location>
        <begin position="195"/>
        <end position="203"/>
    </location>
</feature>
<feature type="helix" evidence="33">
    <location>
        <begin position="217"/>
        <end position="223"/>
    </location>
</feature>
<feature type="helix" evidence="33">
    <location>
        <begin position="227"/>
        <end position="238"/>
    </location>
</feature>
<feature type="helix" evidence="33">
    <location>
        <begin position="239"/>
        <end position="242"/>
    </location>
</feature>
<feature type="helix" evidence="32">
    <location>
        <begin position="262"/>
        <end position="276"/>
    </location>
</feature>
<feature type="strand" evidence="30">
    <location>
        <begin position="280"/>
        <end position="282"/>
    </location>
</feature>
<feature type="helix" evidence="32">
    <location>
        <begin position="294"/>
        <end position="296"/>
    </location>
</feature>
<feature type="helix" evidence="32">
    <location>
        <begin position="305"/>
        <end position="309"/>
    </location>
</feature>
<feature type="helix" evidence="30">
    <location>
        <begin position="310"/>
        <end position="313"/>
    </location>
</feature>
<feature type="helix" evidence="32">
    <location>
        <begin position="315"/>
        <end position="330"/>
    </location>
</feature>
<feature type="helix" evidence="32">
    <location>
        <begin position="335"/>
        <end position="350"/>
    </location>
</feature>
<feature type="helix" evidence="32">
    <location>
        <begin position="354"/>
        <end position="370"/>
    </location>
</feature>
<feature type="helix" evidence="31">
    <location>
        <begin position="382"/>
        <end position="384"/>
    </location>
</feature>
<feature type="helix" evidence="32">
    <location>
        <begin position="386"/>
        <end position="393"/>
    </location>
</feature>
<proteinExistence type="evidence at protein level"/>
<evidence type="ECO:0000269" key="1">
    <source>
    </source>
</evidence>
<evidence type="ECO:0000269" key="2">
    <source>
    </source>
</evidence>
<evidence type="ECO:0000269" key="3">
    <source>
    </source>
</evidence>
<evidence type="ECO:0000269" key="4">
    <source>
    </source>
</evidence>
<evidence type="ECO:0000269" key="5">
    <source>
    </source>
</evidence>
<evidence type="ECO:0000269" key="6">
    <source>
    </source>
</evidence>
<evidence type="ECO:0000269" key="7">
    <source>
    </source>
</evidence>
<evidence type="ECO:0000269" key="8">
    <source>
    </source>
</evidence>
<evidence type="ECO:0000269" key="9">
    <source>
    </source>
</evidence>
<evidence type="ECO:0000269" key="10">
    <source>
    </source>
</evidence>
<evidence type="ECO:0000269" key="11">
    <source>
    </source>
</evidence>
<evidence type="ECO:0000303" key="12">
    <source>
    </source>
</evidence>
<evidence type="ECO:0000303" key="13">
    <source>
    </source>
</evidence>
<evidence type="ECO:0000305" key="14"/>
<evidence type="ECO:0000305" key="15">
    <source>
    </source>
</evidence>
<evidence type="ECO:0000312" key="16">
    <source>
        <dbReference type="HGNC" id="HGNC:16933"/>
    </source>
</evidence>
<evidence type="ECO:0007744" key="17">
    <source>
        <dbReference type="PDB" id="6LBG"/>
    </source>
</evidence>
<evidence type="ECO:0007744" key="18">
    <source>
        <dbReference type="PDB" id="6LBN"/>
    </source>
</evidence>
<evidence type="ECO:0007744" key="19">
    <source>
        <dbReference type="PDB" id="6LDP"/>
    </source>
</evidence>
<evidence type="ECO:0007744" key="20">
    <source>
        <dbReference type="PDB" id="6LE6"/>
    </source>
</evidence>
<evidence type="ECO:0007744" key="21">
    <source>
        <dbReference type="PDB" id="6LEN"/>
    </source>
</evidence>
<evidence type="ECO:0007744" key="22">
    <source>
        <dbReference type="PDB" id="6LEY"/>
    </source>
</evidence>
<evidence type="ECO:0007744" key="23">
    <source>
        <dbReference type="PDB" id="6LF0"/>
    </source>
</evidence>
<evidence type="ECO:0007744" key="24">
    <source>
        <dbReference type="PDB" id="6XKC"/>
    </source>
</evidence>
<evidence type="ECO:0007744" key="25">
    <source>
        <dbReference type="PDB" id="7JYA"/>
    </source>
</evidence>
<evidence type="ECO:0007744" key="26">
    <source>
        <dbReference type="PDB" id="8PQL"/>
    </source>
</evidence>
<evidence type="ECO:0007744" key="27">
    <source>
    </source>
</evidence>
<evidence type="ECO:0007829" key="28">
    <source>
        <dbReference type="PDB" id="6LBG"/>
    </source>
</evidence>
<evidence type="ECO:0007829" key="29">
    <source>
        <dbReference type="PDB" id="6LBN"/>
    </source>
</evidence>
<evidence type="ECO:0007829" key="30">
    <source>
        <dbReference type="PDB" id="6LDP"/>
    </source>
</evidence>
<evidence type="ECO:0007829" key="31">
    <source>
        <dbReference type="PDB" id="6LE6"/>
    </source>
</evidence>
<evidence type="ECO:0007829" key="32">
    <source>
        <dbReference type="PDB" id="6LF0"/>
    </source>
</evidence>
<evidence type="ECO:0007829" key="33">
    <source>
        <dbReference type="PDB" id="6XKC"/>
    </source>
</evidence>
<dbReference type="EMBL" id="AF391093">
    <property type="protein sequence ID" value="AAL37627.1"/>
    <property type="molecule type" value="mRNA"/>
</dbReference>
<dbReference type="EMBL" id="AY249188">
    <property type="protein sequence ID" value="AAO64429.1"/>
    <property type="molecule type" value="mRNA"/>
</dbReference>
<dbReference type="EMBL" id="AB058688">
    <property type="protein sequence ID" value="BAB47414.1"/>
    <property type="molecule type" value="mRNA"/>
</dbReference>
<dbReference type="EMBL" id="AK025265">
    <property type="protein sequence ID" value="BAB15096.1"/>
    <property type="status" value="ALT_INIT"/>
    <property type="molecule type" value="mRNA"/>
</dbReference>
<dbReference type="EMBL" id="AK315803">
    <property type="protein sequence ID" value="BAG38144.1"/>
    <property type="molecule type" value="mRNA"/>
</dbReference>
<dbReference type="EMBL" id="CH471086">
    <property type="protein sequence ID" value="EAW48963.1"/>
    <property type="molecule type" value="Genomic_DNA"/>
</dbReference>
<dbReference type="EMBL" id="BC028369">
    <property type="protein sequence ID" value="AAH28369.1"/>
    <property type="molecule type" value="mRNA"/>
</dbReference>
<dbReference type="EMBL" id="AL365409">
    <property type="protein sequence ID" value="CAB96953.1"/>
    <property type="molecule type" value="mRNA"/>
</dbReference>
<dbReference type="EMBL" id="AL365415">
    <property type="protein sequence ID" value="CAB96957.1"/>
    <property type="molecule type" value="mRNA"/>
</dbReference>
<dbReference type="EMBL" id="AL831817">
    <property type="protein sequence ID" value="CAD38531.1"/>
    <property type="molecule type" value="mRNA"/>
</dbReference>
<dbReference type="CCDS" id="CCDS4118.1"/>
<dbReference type="RefSeq" id="NP_064562.1">
    <property type="nucleotide sequence ID" value="NM_020177.3"/>
</dbReference>
<dbReference type="RefSeq" id="XP_005272092.1">
    <property type="nucleotide sequence ID" value="XM_005272035.4"/>
</dbReference>
<dbReference type="PDB" id="6LBG">
    <property type="method" value="X-ray"/>
    <property type="resolution" value="2.51 A"/>
    <property type="chains" value="A/B=1-390"/>
</dbReference>
<dbReference type="PDB" id="6LBN">
    <property type="method" value="X-ray"/>
    <property type="resolution" value="2.90 A"/>
    <property type="chains" value="A/B=1-390"/>
</dbReference>
<dbReference type="PDB" id="6LDP">
    <property type="method" value="X-ray"/>
    <property type="resolution" value="2.35 A"/>
    <property type="chains" value="A/B=1-390"/>
</dbReference>
<dbReference type="PDB" id="6LE6">
    <property type="method" value="X-ray"/>
    <property type="resolution" value="2.33 A"/>
    <property type="chains" value="A/B=1-390"/>
</dbReference>
<dbReference type="PDB" id="6LEN">
    <property type="method" value="X-ray"/>
    <property type="resolution" value="2.38 A"/>
    <property type="chains" value="A/B=1-390"/>
</dbReference>
<dbReference type="PDB" id="6LEY">
    <property type="method" value="X-ray"/>
    <property type="resolution" value="2.39 A"/>
    <property type="chains" value="A/B=1-390"/>
</dbReference>
<dbReference type="PDB" id="6LF0">
    <property type="method" value="X-ray"/>
    <property type="resolution" value="2.11 A"/>
    <property type="chains" value="A/B=1-403"/>
</dbReference>
<dbReference type="PDB" id="6XKC">
    <property type="method" value="X-ray"/>
    <property type="resolution" value="2.03 A"/>
    <property type="chains" value="A/B/C/D/E/F=1-244"/>
</dbReference>
<dbReference type="PDB" id="7JYA">
    <property type="method" value="X-ray"/>
    <property type="resolution" value="2.46 A"/>
    <property type="chains" value="A/B/C=2-371"/>
</dbReference>
<dbReference type="PDB" id="8PQL">
    <property type="method" value="EM"/>
    <property type="resolution" value="3.76 A"/>
    <property type="chains" value="H=1-617"/>
</dbReference>
<dbReference type="PDB" id="8Q7R">
    <property type="method" value="EM"/>
    <property type="resolution" value="3.71 A"/>
    <property type="chains" value="H=1-617"/>
</dbReference>
<dbReference type="PDBsum" id="6LBG"/>
<dbReference type="PDBsum" id="6LBN"/>
<dbReference type="PDBsum" id="6LDP"/>
<dbReference type="PDBsum" id="6LE6"/>
<dbReference type="PDBsum" id="6LEN"/>
<dbReference type="PDBsum" id="6LEY"/>
<dbReference type="PDBsum" id="6LF0"/>
<dbReference type="PDBsum" id="6XKC"/>
<dbReference type="PDBsum" id="7JYA"/>
<dbReference type="PDBsum" id="8PQL"/>
<dbReference type="PDBsum" id="8Q7R"/>
<dbReference type="EMDB" id="EMD-17822"/>
<dbReference type="EMDB" id="EMD-18230"/>
<dbReference type="EMDB" id="EMD-19856"/>
<dbReference type="EMDB" id="EMD-19857"/>
<dbReference type="EMDB" id="EMD-19858"/>
<dbReference type="EMDB" id="EMD-19859"/>
<dbReference type="EMDB" id="EMD-19860"/>
<dbReference type="SMR" id="Q96JP0"/>
<dbReference type="BioGRID" id="121256">
    <property type="interactions" value="26"/>
</dbReference>
<dbReference type="ComplexPortal" id="CPX-2219">
    <property type="entry name" value="FEB1C-Elongin C-Elongin B E3 ubiquitin ligase complex"/>
</dbReference>
<dbReference type="FunCoup" id="Q96JP0">
    <property type="interactions" value="1142"/>
</dbReference>
<dbReference type="IntAct" id="Q96JP0">
    <property type="interactions" value="16"/>
</dbReference>
<dbReference type="STRING" id="9606.ENSP00000274457"/>
<dbReference type="GlyGen" id="Q96JP0">
    <property type="glycosylation" value="2 sites, 1 O-linked glycan (1 site)"/>
</dbReference>
<dbReference type="iPTMnet" id="Q96JP0"/>
<dbReference type="PhosphoSitePlus" id="Q96JP0"/>
<dbReference type="BioMuta" id="FEM1C"/>
<dbReference type="DMDM" id="74751963"/>
<dbReference type="jPOST" id="Q96JP0"/>
<dbReference type="MassIVE" id="Q96JP0"/>
<dbReference type="PaxDb" id="9606-ENSP00000274457"/>
<dbReference type="PeptideAtlas" id="Q96JP0"/>
<dbReference type="ProteomicsDB" id="76997"/>
<dbReference type="Pumba" id="Q96JP0"/>
<dbReference type="Antibodypedia" id="25422">
    <property type="antibodies" value="125 antibodies from 25 providers"/>
</dbReference>
<dbReference type="DNASU" id="56929"/>
<dbReference type="Ensembl" id="ENST00000274457.5">
    <property type="protein sequence ID" value="ENSP00000274457.3"/>
    <property type="gene ID" value="ENSG00000145780.8"/>
</dbReference>
<dbReference type="GeneID" id="56929"/>
<dbReference type="KEGG" id="hsa:56929"/>
<dbReference type="MANE-Select" id="ENST00000274457.5">
    <property type="protein sequence ID" value="ENSP00000274457.3"/>
    <property type="RefSeq nucleotide sequence ID" value="NM_020177.3"/>
    <property type="RefSeq protein sequence ID" value="NP_064562.1"/>
</dbReference>
<dbReference type="UCSC" id="uc003krb.2">
    <property type="organism name" value="human"/>
</dbReference>
<dbReference type="AGR" id="HGNC:16933"/>
<dbReference type="CTD" id="56929"/>
<dbReference type="DisGeNET" id="56929"/>
<dbReference type="GeneCards" id="FEM1C"/>
<dbReference type="HGNC" id="HGNC:16933">
    <property type="gene designation" value="FEM1C"/>
</dbReference>
<dbReference type="HPA" id="ENSG00000145780">
    <property type="expression patterns" value="Tissue enhanced (bone)"/>
</dbReference>
<dbReference type="MIM" id="608767">
    <property type="type" value="gene"/>
</dbReference>
<dbReference type="neXtProt" id="NX_Q96JP0"/>
<dbReference type="OpenTargets" id="ENSG00000145780"/>
<dbReference type="PharmGKB" id="PA134891999"/>
<dbReference type="VEuPathDB" id="HostDB:ENSG00000145780"/>
<dbReference type="eggNOG" id="KOG0508">
    <property type="taxonomic scope" value="Eukaryota"/>
</dbReference>
<dbReference type="GeneTree" id="ENSGT00940000158626"/>
<dbReference type="HOGENOM" id="CLU_020042_2_0_1"/>
<dbReference type="InParanoid" id="Q96JP0"/>
<dbReference type="OMA" id="FMTTEWR"/>
<dbReference type="OrthoDB" id="4429489at2759"/>
<dbReference type="PAN-GO" id="Q96JP0">
    <property type="GO annotations" value="2 GO annotations based on evolutionary models"/>
</dbReference>
<dbReference type="PhylomeDB" id="Q96JP0"/>
<dbReference type="TreeFam" id="TF351376"/>
<dbReference type="PathwayCommons" id="Q96JP0"/>
<dbReference type="Reactome" id="R-HSA-8951664">
    <property type="pathway name" value="Neddylation"/>
</dbReference>
<dbReference type="SignaLink" id="Q96JP0"/>
<dbReference type="UniPathway" id="UPA00143"/>
<dbReference type="BioGRID-ORCS" id="56929">
    <property type="hits" value="15 hits in 1193 CRISPR screens"/>
</dbReference>
<dbReference type="ChiTaRS" id="FEM1C">
    <property type="organism name" value="human"/>
</dbReference>
<dbReference type="GenomeRNAi" id="56929"/>
<dbReference type="Pharos" id="Q96JP0">
    <property type="development level" value="Tbio"/>
</dbReference>
<dbReference type="PRO" id="PR:Q96JP0"/>
<dbReference type="Proteomes" id="UP000005640">
    <property type="component" value="Chromosome 5"/>
</dbReference>
<dbReference type="RNAct" id="Q96JP0">
    <property type="molecule type" value="protein"/>
</dbReference>
<dbReference type="Bgee" id="ENSG00000145780">
    <property type="expression patterns" value="Expressed in sperm and 179 other cell types or tissues"/>
</dbReference>
<dbReference type="GO" id="GO:0031462">
    <property type="term" value="C:Cul2-RING ubiquitin ligase complex"/>
    <property type="evidence" value="ECO:0000314"/>
    <property type="project" value="UniProtKB"/>
</dbReference>
<dbReference type="GO" id="GO:0005829">
    <property type="term" value="C:cytosol"/>
    <property type="evidence" value="ECO:0000314"/>
    <property type="project" value="HPA"/>
</dbReference>
<dbReference type="GO" id="GO:0005654">
    <property type="term" value="C:nucleoplasm"/>
    <property type="evidence" value="ECO:0000314"/>
    <property type="project" value="HPA"/>
</dbReference>
<dbReference type="GO" id="GO:0000151">
    <property type="term" value="C:ubiquitin ligase complex"/>
    <property type="evidence" value="ECO:0000318"/>
    <property type="project" value="GO_Central"/>
</dbReference>
<dbReference type="GO" id="GO:1990756">
    <property type="term" value="F:ubiquitin-like ligase-substrate adaptor activity"/>
    <property type="evidence" value="ECO:0000314"/>
    <property type="project" value="UniProtKB"/>
</dbReference>
<dbReference type="GO" id="GO:0043161">
    <property type="term" value="P:proteasome-mediated ubiquitin-dependent protein catabolic process"/>
    <property type="evidence" value="ECO:0000314"/>
    <property type="project" value="UniProtKB"/>
</dbReference>
<dbReference type="GO" id="GO:0016567">
    <property type="term" value="P:protein ubiquitination"/>
    <property type="evidence" value="ECO:0007669"/>
    <property type="project" value="UniProtKB-UniPathway"/>
</dbReference>
<dbReference type="GO" id="GO:0140627">
    <property type="term" value="P:ubiquitin-dependent protein catabolic process via the C-end degron rule pathway"/>
    <property type="evidence" value="ECO:0000314"/>
    <property type="project" value="UniProtKB"/>
</dbReference>
<dbReference type="FunFam" id="1.25.40.10:FF:000104">
    <property type="entry name" value="Fem-1 homolog c (C.elegans)"/>
    <property type="match status" value="1"/>
</dbReference>
<dbReference type="FunFam" id="1.25.40.20:FF:000076">
    <property type="entry name" value="Fem-1 homolog c (C.elegans)"/>
    <property type="match status" value="1"/>
</dbReference>
<dbReference type="FunFam" id="1.25.40.20:FF:000163">
    <property type="entry name" value="Fem-1 homolog c (C.elegans)"/>
    <property type="match status" value="1"/>
</dbReference>
<dbReference type="FunFam" id="1.25.40.20:FF:000173">
    <property type="entry name" value="Fem-1 homolog c (C.elegans)"/>
    <property type="match status" value="1"/>
</dbReference>
<dbReference type="Gene3D" id="1.25.40.20">
    <property type="entry name" value="Ankyrin repeat-containing domain"/>
    <property type="match status" value="3"/>
</dbReference>
<dbReference type="Gene3D" id="1.25.40.10">
    <property type="entry name" value="Tetratricopeptide repeat domain"/>
    <property type="match status" value="1"/>
</dbReference>
<dbReference type="InterPro" id="IPR002110">
    <property type="entry name" value="Ankyrin_rpt"/>
</dbReference>
<dbReference type="InterPro" id="IPR036770">
    <property type="entry name" value="Ankyrin_rpt-contain_sf"/>
</dbReference>
<dbReference type="InterPro" id="IPR011990">
    <property type="entry name" value="TPR-like_helical_dom_sf"/>
</dbReference>
<dbReference type="PANTHER" id="PTHR24173">
    <property type="entry name" value="ANKYRIN REPEAT CONTAINING"/>
    <property type="match status" value="1"/>
</dbReference>
<dbReference type="PANTHER" id="PTHR24173:SF74">
    <property type="entry name" value="ANKYRIN REPEAT DOMAIN-CONTAINING PROTEIN 16"/>
    <property type="match status" value="1"/>
</dbReference>
<dbReference type="Pfam" id="PF00023">
    <property type="entry name" value="Ank"/>
    <property type="match status" value="1"/>
</dbReference>
<dbReference type="Pfam" id="PF12796">
    <property type="entry name" value="Ank_2"/>
    <property type="match status" value="3"/>
</dbReference>
<dbReference type="PRINTS" id="PR01415">
    <property type="entry name" value="ANKYRIN"/>
</dbReference>
<dbReference type="SMART" id="SM00248">
    <property type="entry name" value="ANK"/>
    <property type="match status" value="9"/>
</dbReference>
<dbReference type="SUPFAM" id="SSF48403">
    <property type="entry name" value="Ankyrin repeat"/>
    <property type="match status" value="2"/>
</dbReference>
<dbReference type="PROSITE" id="PS50297">
    <property type="entry name" value="ANK_REP_REGION"/>
    <property type="match status" value="2"/>
</dbReference>
<dbReference type="PROSITE" id="PS50088">
    <property type="entry name" value="ANK_REPEAT"/>
    <property type="match status" value="7"/>
</dbReference>
<comment type="function">
    <text evidence="4 5 6 7 8 9">Substrate-recognition component of a Cul2-RING (CRL2) E3 ubiquitin-protein ligase complex of the DesCEND (destruction via C-end degrons) pathway, which recognizes a C-degron located at the extreme C terminus of target proteins, leading to their ubiquitination and degradation (PubMed:29775578, PubMed:29779948, PubMed:33398168, PubMed:33398170, PubMed:38326650). The C-degron recognized by the DesCEND pathway is usually a motif of less than ten residues and can be present in full-length proteins, truncated proteins or proteolytically cleaved forms (PubMed:29775578, PubMed:29779948, PubMed:33398168, PubMed:33398170). The CRL2(FEM1C) complex specifically recognizes proteins with an arginine at the C-terminus: recognizes and binds proteins ending with -Lys/Arg-Xaa-Arg and -Lys/Arg-Xaa-Xaa-Arg C-degrons, such as SIL1 or OR51B2, leading to their ubiquitination and degradation (PubMed:33398168, PubMed:33398170, PubMed:38326650). The CRL2(FEM1C) complex mediates ubiquitination and degradation of truncated MSRB1/SEPX1 selenoproteins produced by failed UGA/Sec decoding (PubMed:26138980). Promotes ubiquitination and degradation of SLBP (PubMed:28118078).</text>
</comment>
<comment type="pathway">
    <text evidence="5 6 7 8 9 11">Protein modification; protein ubiquitination.</text>
</comment>
<comment type="subunit">
    <text evidence="6 7 11">Component of a Cul2-RING (CRL2) E3 ubiquitin-protein ligase complex, also named ECS (Elongin BC-CUL2/5-SOCS-box protein) complex, composed of CUL2, Elongin BC (ELOB and ELOC), RBX1 and substrate-specific adapter FEM1C.</text>
</comment>
<comment type="interaction">
    <interactant intactId="EBI-2515330">
        <id>Q96JP0</id>
    </interactant>
    <interactant intactId="EBI-11522539">
        <id>Q96MT8-3</id>
        <label>CEP63</label>
    </interactant>
    <organismsDiffer>false</organismsDiffer>
    <experiments>3</experiments>
</comment>
<comment type="interaction">
    <interactant intactId="EBI-2515330">
        <id>Q96JP0</id>
    </interactant>
    <interactant intactId="EBI-741037">
        <id>Q9BRK4</id>
        <label>LZTS2</label>
    </interactant>
    <organismsDiffer>false</organismsDiffer>
    <experiments>3</experiments>
</comment>
<comment type="interaction">
    <interactant intactId="EBI-2515330">
        <id>Q96JP0</id>
    </interactant>
    <interactant intactId="EBI-12056869">
        <id>Q9UDY8-2</id>
        <label>MALT1</label>
    </interactant>
    <organismsDiffer>false</organismsDiffer>
    <experiments>3</experiments>
</comment>
<comment type="interaction">
    <interactant intactId="EBI-2515330">
        <id>Q96JP0</id>
    </interactant>
    <interactant intactId="EBI-13052514">
        <id>Q9UJA3-4</id>
        <label>MCM8</label>
    </interactant>
    <organismsDiffer>false</organismsDiffer>
    <experiments>3</experiments>
</comment>
<comment type="interaction">
    <interactant intactId="EBI-2515330">
        <id>Q96JP0</id>
    </interactant>
    <interactant intactId="EBI-302345">
        <id>Q8ND90</id>
        <label>PNMA1</label>
    </interactant>
    <organismsDiffer>false</organismsDiffer>
    <experiments>3</experiments>
</comment>
<comment type="interaction">
    <interactant intactId="EBI-2515330">
        <id>Q96JP0</id>
    </interactant>
    <interactant intactId="EBI-1050213">
        <id>Q96KN7</id>
        <label>RPGRIP1</label>
    </interactant>
    <organismsDiffer>false</organismsDiffer>
    <experiments>3</experiments>
</comment>
<comment type="tissue specificity">
    <text evidence="1 2">Widely expressed. Highly expressed in kidney, cardiac tissue, skeletal muscle and testis. Expressed at lower levels in other tissues, including cartilage.</text>
</comment>
<comment type="domain">
    <text evidence="9">The first seven ANK repeats at the N-terminus (1-242) are essential for recognition of Lys/Arg-Xaa-Arg and -Lys/Arg-Xaa-Xaa-Arg C-degrons.</text>
</comment>
<comment type="disease">
    <text evidence="10">A dominant de novo FEM1C variant was identified in a patient with neurodevelopmental disorder with absent speech, pyramidal signs, and limb ataxia.</text>
</comment>
<comment type="similarity">
    <text evidence="14">Belongs to the fem-1 family.</text>
</comment>
<comment type="caution">
    <text evidence="15">Was initially thought to be the ortholog of mouse FEM1A.</text>
</comment>
<comment type="sequence caution" evidence="14">
    <conflict type="erroneous initiation">
        <sequence resource="EMBL-CDS" id="BAB15096"/>
    </conflict>
</comment>
<keyword id="KW-0002">3D-structure</keyword>
<keyword id="KW-0007">Acetylation</keyword>
<keyword id="KW-0040">ANK repeat</keyword>
<keyword id="KW-0225">Disease variant</keyword>
<keyword id="KW-1267">Proteomics identification</keyword>
<keyword id="KW-1185">Reference proteome</keyword>
<keyword id="KW-0677">Repeat</keyword>
<keyword id="KW-0802">TPR repeat</keyword>
<keyword id="KW-0833">Ubl conjugation pathway</keyword>
<reference key="1">
    <citation type="journal article" date="2001" name="Gene">
        <title>Identification of human FEM1A, the ortholog of a C. elegans sex-differentiation gene.</title>
        <authorList>
            <person name="Krakow D."/>
            <person name="Sebald E."/>
            <person name="King L.M."/>
            <person name="Cohn D.H."/>
        </authorList>
    </citation>
    <scope>NUCLEOTIDE SEQUENCE [MRNA]</scope>
    <scope>TISSUE SPECIFICITY</scope>
    <source>
        <tissue>Cartilage</tissue>
    </source>
</reference>
<reference key="2">
    <citation type="journal article" date="2003" name="Gene">
        <title>The Fem1c genes: conserved members of the Fem1 gene family in vertebrates.</title>
        <authorList>
            <person name="Ventura-Holman T."/>
            <person name="Lu D."/>
            <person name="Si X."/>
            <person name="Izevbigie E.B."/>
            <person name="Maher J.F."/>
        </authorList>
    </citation>
    <scope>NUCLEOTIDE SEQUENCE [MRNA]</scope>
    <scope>TISSUE SPECIFICITY</scope>
    <source>
        <tissue>Testis</tissue>
    </source>
</reference>
<reference key="3">
    <citation type="journal article" date="2001" name="DNA Res.">
        <title>Prediction of the coding sequences of unidentified human genes. XX. The complete sequences of 100 new cDNA clones from brain which code for large proteins in vitro.</title>
        <authorList>
            <person name="Nagase T."/>
            <person name="Nakayama M."/>
            <person name="Nakajima D."/>
            <person name="Kikuno R."/>
            <person name="Ohara O."/>
        </authorList>
    </citation>
    <scope>NUCLEOTIDE SEQUENCE [LARGE SCALE MRNA]</scope>
    <source>
        <tissue>Brain</tissue>
    </source>
</reference>
<reference key="4">
    <citation type="journal article" date="2004" name="Nat. Genet.">
        <title>Complete sequencing and characterization of 21,243 full-length human cDNAs.</title>
        <authorList>
            <person name="Ota T."/>
            <person name="Suzuki Y."/>
            <person name="Nishikawa T."/>
            <person name="Otsuki T."/>
            <person name="Sugiyama T."/>
            <person name="Irie R."/>
            <person name="Wakamatsu A."/>
            <person name="Hayashi K."/>
            <person name="Sato H."/>
            <person name="Nagai K."/>
            <person name="Kimura K."/>
            <person name="Makita H."/>
            <person name="Sekine M."/>
            <person name="Obayashi M."/>
            <person name="Nishi T."/>
            <person name="Shibahara T."/>
            <person name="Tanaka T."/>
            <person name="Ishii S."/>
            <person name="Yamamoto J."/>
            <person name="Saito K."/>
            <person name="Kawai Y."/>
            <person name="Isono Y."/>
            <person name="Nakamura Y."/>
            <person name="Nagahari K."/>
            <person name="Murakami K."/>
            <person name="Yasuda T."/>
            <person name="Iwayanagi T."/>
            <person name="Wagatsuma M."/>
            <person name="Shiratori A."/>
            <person name="Sudo H."/>
            <person name="Hosoiri T."/>
            <person name="Kaku Y."/>
            <person name="Kodaira H."/>
            <person name="Kondo H."/>
            <person name="Sugawara M."/>
            <person name="Takahashi M."/>
            <person name="Kanda K."/>
            <person name="Yokoi T."/>
            <person name="Furuya T."/>
            <person name="Kikkawa E."/>
            <person name="Omura Y."/>
            <person name="Abe K."/>
            <person name="Kamihara K."/>
            <person name="Katsuta N."/>
            <person name="Sato K."/>
            <person name="Tanikawa M."/>
            <person name="Yamazaki M."/>
            <person name="Ninomiya K."/>
            <person name="Ishibashi T."/>
            <person name="Yamashita H."/>
            <person name="Murakawa K."/>
            <person name="Fujimori K."/>
            <person name="Tanai H."/>
            <person name="Kimata M."/>
            <person name="Watanabe M."/>
            <person name="Hiraoka S."/>
            <person name="Chiba Y."/>
            <person name="Ishida S."/>
            <person name="Ono Y."/>
            <person name="Takiguchi S."/>
            <person name="Watanabe S."/>
            <person name="Yosida M."/>
            <person name="Hotuta T."/>
            <person name="Kusano J."/>
            <person name="Kanehori K."/>
            <person name="Takahashi-Fujii A."/>
            <person name="Hara H."/>
            <person name="Tanase T.-O."/>
            <person name="Nomura Y."/>
            <person name="Togiya S."/>
            <person name="Komai F."/>
            <person name="Hara R."/>
            <person name="Takeuchi K."/>
            <person name="Arita M."/>
            <person name="Imose N."/>
            <person name="Musashino K."/>
            <person name="Yuuki H."/>
            <person name="Oshima A."/>
            <person name="Sasaki N."/>
            <person name="Aotsuka S."/>
            <person name="Yoshikawa Y."/>
            <person name="Matsunawa H."/>
            <person name="Ichihara T."/>
            <person name="Shiohata N."/>
            <person name="Sano S."/>
            <person name="Moriya S."/>
            <person name="Momiyama H."/>
            <person name="Satoh N."/>
            <person name="Takami S."/>
            <person name="Terashima Y."/>
            <person name="Suzuki O."/>
            <person name="Nakagawa S."/>
            <person name="Senoh A."/>
            <person name="Mizoguchi H."/>
            <person name="Goto Y."/>
            <person name="Shimizu F."/>
            <person name="Wakebe H."/>
            <person name="Hishigaki H."/>
            <person name="Watanabe T."/>
            <person name="Sugiyama A."/>
            <person name="Takemoto M."/>
            <person name="Kawakami B."/>
            <person name="Yamazaki M."/>
            <person name="Watanabe K."/>
            <person name="Kumagai A."/>
            <person name="Itakura S."/>
            <person name="Fukuzumi Y."/>
            <person name="Fujimori Y."/>
            <person name="Komiyama M."/>
            <person name="Tashiro H."/>
            <person name="Tanigami A."/>
            <person name="Fujiwara T."/>
            <person name="Ono T."/>
            <person name="Yamada K."/>
            <person name="Fujii Y."/>
            <person name="Ozaki K."/>
            <person name="Hirao M."/>
            <person name="Ohmori Y."/>
            <person name="Kawabata A."/>
            <person name="Hikiji T."/>
            <person name="Kobatake N."/>
            <person name="Inagaki H."/>
            <person name="Ikema Y."/>
            <person name="Okamoto S."/>
            <person name="Okitani R."/>
            <person name="Kawakami T."/>
            <person name="Noguchi S."/>
            <person name="Itoh T."/>
            <person name="Shigeta K."/>
            <person name="Senba T."/>
            <person name="Matsumura K."/>
            <person name="Nakajima Y."/>
            <person name="Mizuno T."/>
            <person name="Morinaga M."/>
            <person name="Sasaki M."/>
            <person name="Togashi T."/>
            <person name="Oyama M."/>
            <person name="Hata H."/>
            <person name="Watanabe M."/>
            <person name="Komatsu T."/>
            <person name="Mizushima-Sugano J."/>
            <person name="Satoh T."/>
            <person name="Shirai Y."/>
            <person name="Takahashi Y."/>
            <person name="Nakagawa K."/>
            <person name="Okumura K."/>
            <person name="Nagase T."/>
            <person name="Nomura N."/>
            <person name="Kikuchi H."/>
            <person name="Masuho Y."/>
            <person name="Yamashita R."/>
            <person name="Nakai K."/>
            <person name="Yada T."/>
            <person name="Nakamura Y."/>
            <person name="Ohara O."/>
            <person name="Isogai T."/>
            <person name="Sugano S."/>
        </authorList>
    </citation>
    <scope>NUCLEOTIDE SEQUENCE [LARGE SCALE MRNA]</scope>
    <source>
        <tissue>Colon</tissue>
        <tissue>Trachea</tissue>
    </source>
</reference>
<reference key="5">
    <citation type="submission" date="2005-09" db="EMBL/GenBank/DDBJ databases">
        <authorList>
            <person name="Mural R.J."/>
            <person name="Istrail S."/>
            <person name="Sutton G.G."/>
            <person name="Florea L."/>
            <person name="Halpern A.L."/>
            <person name="Mobarry C.M."/>
            <person name="Lippert R."/>
            <person name="Walenz B."/>
            <person name="Shatkay H."/>
            <person name="Dew I."/>
            <person name="Miller J.R."/>
            <person name="Flanigan M.J."/>
            <person name="Edwards N.J."/>
            <person name="Bolanos R."/>
            <person name="Fasulo D."/>
            <person name="Halldorsson B.V."/>
            <person name="Hannenhalli S."/>
            <person name="Turner R."/>
            <person name="Yooseph S."/>
            <person name="Lu F."/>
            <person name="Nusskern D.R."/>
            <person name="Shue B.C."/>
            <person name="Zheng X.H."/>
            <person name="Zhong F."/>
            <person name="Delcher A.L."/>
            <person name="Huson D.H."/>
            <person name="Kravitz S.A."/>
            <person name="Mouchard L."/>
            <person name="Reinert K."/>
            <person name="Remington K.A."/>
            <person name="Clark A.G."/>
            <person name="Waterman M.S."/>
            <person name="Eichler E.E."/>
            <person name="Adams M.D."/>
            <person name="Hunkapiller M.W."/>
            <person name="Myers E.W."/>
            <person name="Venter J.C."/>
        </authorList>
    </citation>
    <scope>NUCLEOTIDE SEQUENCE [LARGE SCALE GENOMIC DNA]</scope>
</reference>
<reference key="6">
    <citation type="journal article" date="2004" name="Genome Res.">
        <title>The status, quality, and expansion of the NIH full-length cDNA project: the Mammalian Gene Collection (MGC).</title>
        <authorList>
            <consortium name="The MGC Project Team"/>
        </authorList>
    </citation>
    <scope>NUCLEOTIDE SEQUENCE [LARGE SCALE MRNA]</scope>
    <source>
        <tissue>Testis</tissue>
    </source>
</reference>
<reference key="7">
    <citation type="submission" date="2000-07" db="EMBL/GenBank/DDBJ databases">
        <authorList>
            <consortium name="The European IMAGE consortium"/>
        </authorList>
    </citation>
    <scope>NUCLEOTIDE SEQUENCE [LARGE SCALE MRNA] OF 1-271 AND 301-617</scope>
</reference>
<reference key="8">
    <citation type="journal article" date="2007" name="BMC Genomics">
        <title>The full-ORF clone resource of the German cDNA consortium.</title>
        <authorList>
            <person name="Bechtel S."/>
            <person name="Rosenfelder H."/>
            <person name="Duda A."/>
            <person name="Schmidt C.P."/>
            <person name="Ernst U."/>
            <person name="Wellenreuther R."/>
            <person name="Mehrle A."/>
            <person name="Schuster C."/>
            <person name="Bahr A."/>
            <person name="Bloecker H."/>
            <person name="Heubner D."/>
            <person name="Hoerlein A."/>
            <person name="Michel G."/>
            <person name="Wedler H."/>
            <person name="Koehrer K."/>
            <person name="Ottenwaelder B."/>
            <person name="Poustka A."/>
            <person name="Wiemann S."/>
            <person name="Schupp I."/>
        </authorList>
    </citation>
    <scope>NUCLEOTIDE SEQUENCE [LARGE SCALE MRNA] OF 279-617</scope>
    <source>
        <tissue>Skeletal muscle</tissue>
    </source>
</reference>
<reference key="9">
    <citation type="journal article" date="2012" name="Proc. Natl. Acad. Sci. U.S.A.">
        <title>N-terminal acetylome analyses and functional insights of the N-terminal acetyltransferase NatB.</title>
        <authorList>
            <person name="Van Damme P."/>
            <person name="Lasa M."/>
            <person name="Polevoda B."/>
            <person name="Gazquez C."/>
            <person name="Elosegui-Artola A."/>
            <person name="Kim D.S."/>
            <person name="De Juan-Pardo E."/>
            <person name="Demeyer K."/>
            <person name="Hole K."/>
            <person name="Larrea E."/>
            <person name="Timmerman E."/>
            <person name="Prieto J."/>
            <person name="Arnesen T."/>
            <person name="Sherman F."/>
            <person name="Gevaert K."/>
            <person name="Aldabe R."/>
        </authorList>
    </citation>
    <scope>ACETYLATION [LARGE SCALE ANALYSIS] AT MET-1</scope>
    <scope>IDENTIFICATION BY MASS SPECTROMETRY [LARGE SCALE ANALYSIS]</scope>
</reference>
<reference key="10">
    <citation type="journal article" date="2006" name="Science">
        <title>The consensus coding sequences of human breast and colorectal cancers.</title>
        <authorList>
            <person name="Sjoeblom T."/>
            <person name="Jones S."/>
            <person name="Wood L.D."/>
            <person name="Parsons D.W."/>
            <person name="Lin J."/>
            <person name="Barber T.D."/>
            <person name="Mandelker D."/>
            <person name="Leary R.J."/>
            <person name="Ptak J."/>
            <person name="Silliman N."/>
            <person name="Szabo S."/>
            <person name="Buckhaults P."/>
            <person name="Farrell C."/>
            <person name="Meeh P."/>
            <person name="Markowitz S.D."/>
            <person name="Willis J."/>
            <person name="Dawson D."/>
            <person name="Willson J.K.V."/>
            <person name="Gazdar A.F."/>
            <person name="Hartigan J."/>
            <person name="Wu L."/>
            <person name="Liu C."/>
            <person name="Parmigiani G."/>
            <person name="Park B.H."/>
            <person name="Bachman K.E."/>
            <person name="Papadopoulos N."/>
            <person name="Vogelstein B."/>
            <person name="Kinzler K.W."/>
            <person name="Velculescu V.E."/>
        </authorList>
    </citation>
    <scope>VARIANTS [LARGE SCALE ANALYSIS] ASN-434 AND ASN-462</scope>
</reference>
<reference key="11">
    <citation type="journal article" date="2015" name="Science">
        <title>SELENOPROTEINS. CRL2 aids elimination of truncated selenoproteins produced by failed UGA/Sec decoding.</title>
        <authorList>
            <person name="Lin H.C."/>
            <person name="Ho S.C."/>
            <person name="Chen Y.Y."/>
            <person name="Khoo K.H."/>
            <person name="Hsu P.H."/>
            <person name="Yen H.C."/>
        </authorList>
    </citation>
    <scope>FUNCTION</scope>
</reference>
<reference key="12">
    <citation type="journal article" date="2017" name="Cell Cycle">
        <title>FEM1 proteins are ancient regulators of SLBP degradation.</title>
        <authorList>
            <person name="Dankert J.F."/>
            <person name="Pagan J.K."/>
            <person name="Starostina N.G."/>
            <person name="Kipreos E.T."/>
            <person name="Pagano M."/>
        </authorList>
    </citation>
    <scope>FUNCTION</scope>
    <scope>PATHWAY</scope>
</reference>
<reference key="13">
    <citation type="journal article" date="2018" name="Cell">
        <title>The eukaryotic proteome is shaped by E3 ubiquitin ligases targeting C-terminal degrons.</title>
        <authorList>
            <person name="Koren I."/>
            <person name="Timms R.T."/>
            <person name="Kula T."/>
            <person name="Xu Q."/>
            <person name="Li M.Z."/>
            <person name="Elledge S.J."/>
        </authorList>
    </citation>
    <scope>FUNCTION</scope>
    <scope>PATHWAY</scope>
    <scope>IDENTIFICATION IN A CRL2 E3 UBIQUITIN-PROTEIN LIGASE COMPLEX</scope>
</reference>
<reference key="14">
    <citation type="journal article" date="2018" name="Mol. Cell">
        <title>C-terminal end-directed protein elimination by CRL2 ubiquitin ligases.</title>
        <authorList>
            <person name="Lin H.C."/>
            <person name="Yeh C.W."/>
            <person name="Chen Y.F."/>
            <person name="Lee T.T."/>
            <person name="Hsieh P.Y."/>
            <person name="Rusnac D.V."/>
            <person name="Lin S.Y."/>
            <person name="Elledge S.J."/>
            <person name="Zheng N."/>
            <person name="Yen H.S."/>
        </authorList>
    </citation>
    <scope>FUNCTION</scope>
    <scope>PATHWAY</scope>
    <scope>IDENTIFICATION IN A CRL2 E3 UBIQUITIN-PROTEIN LIGASE COMPLEX</scope>
</reference>
<reference evidence="17 18 19 20 21 22 23" key="15">
    <citation type="journal article" date="2021" name="Nat. Chem. Biol.">
        <title>Molecular basis for arginine C-terminal degron recognition by Cul2FEM1 E3 ligase.</title>
        <authorList>
            <person name="Chen X."/>
            <person name="Liao S."/>
            <person name="Makaros Y."/>
            <person name="Guo Q."/>
            <person name="Zhu Z."/>
            <person name="Krizelman R."/>
            <person name="Dahan K."/>
            <person name="Tu X."/>
            <person name="Yao X."/>
            <person name="Koren I."/>
            <person name="Xu C."/>
        </authorList>
    </citation>
    <scope>X-RAY CRYSTALLOGRAPHY (2.11 ANGSTROMS) OF 1-403 IN COMPLEX WITH C-DEGRONS</scope>
    <scope>FUNCTION</scope>
    <scope>PATHWAY</scope>
    <scope>MUTAGENESIS OF ASP-77; ARG-121; PHE-125; ASP-126; HIS-148; HIS-150; TYR-158; 183-ASN--ASP-188 AND 183-ASN--GLU-191</scope>
</reference>
<reference evidence="24 25" key="16">
    <citation type="journal article" date="2021" name="Nat. Chem. Biol.">
        <title>Molecular basis for ubiquitin ligase CRL2FEM1C-mediated recognition of C-degron.</title>
        <authorList>
            <person name="Yan X."/>
            <person name="Wang X."/>
            <person name="Li Y."/>
            <person name="Zhou M."/>
            <person name="Li Y."/>
            <person name="Song L."/>
            <person name="Mi W."/>
            <person name="Min J."/>
            <person name="Dong C."/>
        </authorList>
    </citation>
    <scope>X-RAY CRYSTALLOGRAPHY (2.03 ANGSTROMS) OF 1-244 IN COMPLEX WITH C-DEGRON</scope>
    <scope>FUNCTION</scope>
    <scope>PATHWAY</scope>
    <scope>DOMAIN</scope>
    <scope>MUTAGENESIS OF PHE-76; ASP-77; SER-117; ARG-121; PHE-125; ASP-126; ASP-188 AND GLU-191</scope>
</reference>
<reference evidence="26" key="17">
    <citation type="journal article" date="2024" name="Nat. Struct. Mol. Biol.">
        <title>Mechanism of millisecond Lys48-linked poly-ubiquitin chain formation by cullin-RING ligases.</title>
        <authorList>
            <person name="Liwocha J."/>
            <person name="Li J."/>
            <person name="Purser N."/>
            <person name="Rattanasopa C."/>
            <person name="Maiwald S."/>
            <person name="Krist D.T."/>
            <person name="Scott D.C."/>
            <person name="Steigenberger B."/>
            <person name="Prabu J.R."/>
            <person name="Schulman B.A."/>
            <person name="Kleiger G."/>
        </authorList>
    </citation>
    <scope>STRUCTURE BY ELECTRON MICROSCOPY (3.76 ANGSTROMS) OF CRL2(FEM1C) COMPLEX IN COMPLEX WITH UBE2R2</scope>
    <scope>FUNCTION</scope>
    <scope>PATHWAY</scope>
    <scope>SUBUNIT</scope>
</reference>
<reference key="18">
    <citation type="journal article" date="2023" name="Hum. Mol. Genet.">
        <title>A novel de novo FEM1C variant is linked to neurodevelopmental disorder with absent speech, pyramidal signs, and limb ataxia.</title>
        <authorList>
            <person name="Dubey A.A."/>
            <person name="Krygier M."/>
            <person name="Szulc N.A."/>
            <person name="Rutkowska K."/>
            <person name="Kosinska J."/>
            <person name="Pollak A."/>
            <person name="Rydzanicz M."/>
            <person name="Kmiec T."/>
            <person name="Mazurkiewicz-Beldzinska M."/>
            <person name="Pokrzywa W."/>
            <person name="Ploski R."/>
        </authorList>
    </citation>
    <scope>INVOLVEMENT IN NEURODEVELOPMENTAL DISORDER</scope>
    <scope>VARIANT NEURODEVELOPMENTAL DISORDER HIS-126</scope>
</reference>
<gene>
    <name evidence="13 16" type="primary">FEM1C</name>
    <name evidence="12" type="synonym">KIAA1785</name>
</gene>
<accession>Q96JP0</accession>
<accession>B2RE47</accession>
<accession>Q8N3V8</accession>
<accession>Q9H704</accession>
<accession>Q9NPL6</accession>
<accession>Q9NPL9</accession>
<sequence>MDLKTAVFNAARDGKLRLLTKLLASKSKEEVSSLISEKTNGATPLLMAARYGHLDMVEFLLEQCSASIEVGGSVNFDGETIEGAPPLWAASAAGHLKVVQSLLNHGASVNNTTLTNSTPLRAACFDGHLEIVKYLVEHKADLEVSNRHGHTCLMISCYKGHKEIAQYLLEKGADVNRKSVKGNTALHDCAESGSLDIMKMLLMYCAKMEKDGYGMTPLLSASVTGHTNIVDFLTHHAQTSKTERINALELLGATFVDKKRDLLGALKYWKKAMNMRYSDRTNIISKPVPQTLIMAYDYAKEVNSAEELEGLIADPDEMRMQALLIRERILGPSHPDTSYYIRYRGAVYADSGNFKRCINLWKYALDMQQSNLDPLSPMTASSLLSFAELFSFMLQDRAKGLLGTTVTFDDLMGILCKSVLEIERAIKQTQCPADPLQLNKALSIILHLICLLEKVPCTLEQDHFKKQTIYRFLKLHPRGKNNFSPLHLAVDKNTTCVGRYPVCKFPSLQVTAILIECGADVNVRDSDDNSPLHIAALNNHPDIMNLLIKSGAHFDATNLHKQTASDLLDEKEIAKNLIQPINHTTLQCLAARVIVNHRIYYKGHIPEKLETFVSLHR</sequence>